<comment type="function">
    <text evidence="11 12">Component of the mitochondrial ribosome (mitoribosome), a dedicated translation machinery responsible for the synthesis of mitochondrial genome-encoded proteins, including at least some of the essential transmembrane subunits of the mitochondrial respiratory chain. The mitoribosomes are attached to the mitochondrial inner membrane and translation products are cotranslationally integrated into the membrane.</text>
</comment>
<comment type="subunit">
    <text evidence="3 7">Component of the mitochondrial large ribosomal subunit (mt-LSU). Mature yeast 74S mitochondrial ribosomes consist of a small (37S) and a large (54S) subunit. The 37S small subunit contains a 15S ribosomal RNA (15S mt-rRNA) and 34 different proteins. The 54S large subunit contains a 21S rRNA (21S mt-rRNA) and 46 different proteins. uL22m forms the wall of the exit tunnel.</text>
</comment>
<comment type="interaction">
    <interactant intactId="EBI-29042">
        <id>P53881</id>
    </interactant>
    <interactant intactId="EBI-402">
        <id>P36517</id>
        <label>MRPL4</label>
    </interactant>
    <organismsDiffer>false</organismsDiffer>
    <experiments>2</experiments>
</comment>
<comment type="subcellular location">
    <subcellularLocation>
        <location evidence="4 6">Mitochondrion</location>
    </subcellularLocation>
    <text evidence="8">Mitoribosomes are tethered to the mitochondrial inner membrane and spatially aligned with the membrane insertion machinery through two distinct membrane contact sites, formed by the 21S rRNA expansion segment 96-ES1 and the inner membrane protein MBA1.</text>
</comment>
<comment type="miscellaneous">
    <text evidence="5">Present with 1800 molecules/cell in log phase SD medium.</text>
</comment>
<comment type="similarity">
    <text evidence="10">Belongs to the universal ribosomal protein uL22 family.</text>
</comment>
<keyword id="KW-0002">3D-structure</keyword>
<keyword id="KW-0496">Mitochondrion</keyword>
<keyword id="KW-1185">Reference proteome</keyword>
<keyword id="KW-0687">Ribonucleoprotein</keyword>
<keyword id="KW-0689">Ribosomal protein</keyword>
<keyword id="KW-0809">Transit peptide</keyword>
<gene>
    <name type="primary">MRPL22</name>
    <name type="ordered locus">YNL177C</name>
    <name type="ORF">N1657</name>
</gene>
<organism>
    <name type="scientific">Saccharomyces cerevisiae (strain ATCC 204508 / S288c)</name>
    <name type="common">Baker's yeast</name>
    <dbReference type="NCBI Taxonomy" id="559292"/>
    <lineage>
        <taxon>Eukaryota</taxon>
        <taxon>Fungi</taxon>
        <taxon>Dikarya</taxon>
        <taxon>Ascomycota</taxon>
        <taxon>Saccharomycotina</taxon>
        <taxon>Saccharomycetes</taxon>
        <taxon>Saccharomycetales</taxon>
        <taxon>Saccharomycetaceae</taxon>
        <taxon>Saccharomyces</taxon>
    </lineage>
</organism>
<evidence type="ECO:0000255" key="1"/>
<evidence type="ECO:0000256" key="2">
    <source>
        <dbReference type="SAM" id="MobiDB-lite"/>
    </source>
</evidence>
<evidence type="ECO:0000269" key="3">
    <source>
    </source>
</evidence>
<evidence type="ECO:0000269" key="4">
    <source>
    </source>
</evidence>
<evidence type="ECO:0000269" key="5">
    <source>
    </source>
</evidence>
<evidence type="ECO:0000269" key="6">
    <source>
    </source>
</evidence>
<evidence type="ECO:0000269" key="7">
    <source>
    </source>
</evidence>
<evidence type="ECO:0000269" key="8">
    <source>
    </source>
</evidence>
<evidence type="ECO:0000303" key="9">
    <source>
    </source>
</evidence>
<evidence type="ECO:0000305" key="10"/>
<evidence type="ECO:0000305" key="11">
    <source>
    </source>
</evidence>
<evidence type="ECO:0000305" key="12">
    <source>
    </source>
</evidence>
<proteinExistence type="evidence at protein level"/>
<feature type="transit peptide" description="Mitochondrion" evidence="1">
    <location>
        <begin position="1"/>
        <end position="25"/>
    </location>
</feature>
<feature type="chain" id="PRO_0000030487" description="Large ribosomal subunit protein uL22m">
    <location>
        <begin position="26"/>
        <end position="309"/>
    </location>
</feature>
<feature type="region of interest" description="Disordered" evidence="2">
    <location>
        <begin position="40"/>
        <end position="63"/>
    </location>
</feature>
<feature type="compositionally biased region" description="Basic and acidic residues" evidence="2">
    <location>
        <begin position="48"/>
        <end position="59"/>
    </location>
</feature>
<feature type="sequence conflict" description="In Ref. 1; CAA96069." evidence="10" ref="1">
    <original>L</original>
    <variation>F</variation>
    <location>
        <position position="151"/>
    </location>
</feature>
<dbReference type="EMBL" id="Z71453">
    <property type="protein sequence ID" value="CAA96069.1"/>
    <property type="molecule type" value="Genomic_DNA"/>
</dbReference>
<dbReference type="EMBL" id="BK006947">
    <property type="protein sequence ID" value="DAA10374.2"/>
    <property type="molecule type" value="Genomic_DNA"/>
</dbReference>
<dbReference type="PIR" id="S63132">
    <property type="entry name" value="S63132"/>
</dbReference>
<dbReference type="RefSeq" id="NP_014222.2">
    <property type="nucleotide sequence ID" value="NM_001183015.2"/>
</dbReference>
<dbReference type="PDB" id="3J6B">
    <property type="method" value="EM"/>
    <property type="resolution" value="3.20 A"/>
    <property type="chains" value="O=1-309"/>
</dbReference>
<dbReference type="PDB" id="5MRC">
    <property type="method" value="EM"/>
    <property type="resolution" value="3.25 A"/>
    <property type="chains" value="O=85-309"/>
</dbReference>
<dbReference type="PDB" id="5MRE">
    <property type="method" value="EM"/>
    <property type="resolution" value="3.75 A"/>
    <property type="chains" value="O=85-309"/>
</dbReference>
<dbReference type="PDB" id="5MRF">
    <property type="method" value="EM"/>
    <property type="resolution" value="4.97 A"/>
    <property type="chains" value="O=85-309"/>
</dbReference>
<dbReference type="PDBsum" id="3J6B"/>
<dbReference type="PDBsum" id="5MRC"/>
<dbReference type="PDBsum" id="5MRE"/>
<dbReference type="PDBsum" id="5MRF"/>
<dbReference type="EMDB" id="EMD-3551"/>
<dbReference type="EMDB" id="EMD-3552"/>
<dbReference type="EMDB" id="EMD-3553"/>
<dbReference type="SMR" id="P53881"/>
<dbReference type="BioGRID" id="35654">
    <property type="interactions" value="154"/>
</dbReference>
<dbReference type="ComplexPortal" id="CPX-1602">
    <property type="entry name" value="54S mitochondrial large ribosomal subunit"/>
</dbReference>
<dbReference type="DIP" id="DIP-7695N"/>
<dbReference type="FunCoup" id="P53881">
    <property type="interactions" value="369"/>
</dbReference>
<dbReference type="IntAct" id="P53881">
    <property type="interactions" value="105"/>
</dbReference>
<dbReference type="MINT" id="P53881"/>
<dbReference type="STRING" id="4932.YNL177C"/>
<dbReference type="PaxDb" id="4932-YNL177C"/>
<dbReference type="PeptideAtlas" id="P53881"/>
<dbReference type="EnsemblFungi" id="YNL177C_mRNA">
    <property type="protein sequence ID" value="YNL177C"/>
    <property type="gene ID" value="YNL177C"/>
</dbReference>
<dbReference type="GeneID" id="855544"/>
<dbReference type="KEGG" id="sce:YNL177C"/>
<dbReference type="AGR" id="SGD:S000005121"/>
<dbReference type="SGD" id="S000005121">
    <property type="gene designation" value="MRPL22"/>
</dbReference>
<dbReference type="VEuPathDB" id="FungiDB:YNL177C"/>
<dbReference type="eggNOG" id="KOG1711">
    <property type="taxonomic scope" value="Eukaryota"/>
</dbReference>
<dbReference type="GeneTree" id="ENSGT00390000002110"/>
<dbReference type="HOGENOM" id="CLU_081667_0_0_1"/>
<dbReference type="InParanoid" id="P53881"/>
<dbReference type="OMA" id="WVQLADK"/>
<dbReference type="OrthoDB" id="416470at2759"/>
<dbReference type="BioCyc" id="YEAST:G3O-33189-MONOMER"/>
<dbReference type="BioGRID-ORCS" id="855544">
    <property type="hits" value="0 hits in 10 CRISPR screens"/>
</dbReference>
<dbReference type="PRO" id="PR:P53881"/>
<dbReference type="Proteomes" id="UP000002311">
    <property type="component" value="Chromosome XIV"/>
</dbReference>
<dbReference type="RNAct" id="P53881">
    <property type="molecule type" value="protein"/>
</dbReference>
<dbReference type="GO" id="GO:0005743">
    <property type="term" value="C:mitochondrial inner membrane"/>
    <property type="evidence" value="ECO:0000303"/>
    <property type="project" value="ComplexPortal"/>
</dbReference>
<dbReference type="GO" id="GO:0005762">
    <property type="term" value="C:mitochondrial large ribosomal subunit"/>
    <property type="evidence" value="ECO:0000314"/>
    <property type="project" value="SGD"/>
</dbReference>
<dbReference type="GO" id="GO:0005739">
    <property type="term" value="C:mitochondrion"/>
    <property type="evidence" value="ECO:0007005"/>
    <property type="project" value="SGD"/>
</dbReference>
<dbReference type="GO" id="GO:0003735">
    <property type="term" value="F:structural constituent of ribosome"/>
    <property type="evidence" value="ECO:0000314"/>
    <property type="project" value="SGD"/>
</dbReference>
<dbReference type="GO" id="GO:0032543">
    <property type="term" value="P:mitochondrial translation"/>
    <property type="evidence" value="ECO:0000303"/>
    <property type="project" value="ComplexPortal"/>
</dbReference>
<dbReference type="GO" id="GO:0006412">
    <property type="term" value="P:translation"/>
    <property type="evidence" value="ECO:0000318"/>
    <property type="project" value="GO_Central"/>
</dbReference>
<dbReference type="FunFam" id="3.90.470.10:FF:000022">
    <property type="entry name" value="Mitochondrial ribosomal protein"/>
    <property type="match status" value="1"/>
</dbReference>
<dbReference type="Gene3D" id="3.90.470.10">
    <property type="entry name" value="Ribosomal protein L22/L17"/>
    <property type="match status" value="1"/>
</dbReference>
<dbReference type="InterPro" id="IPR001063">
    <property type="entry name" value="Ribosomal_uL22"/>
</dbReference>
<dbReference type="InterPro" id="IPR047867">
    <property type="entry name" value="Ribosomal_uL22_bac/org-type"/>
</dbReference>
<dbReference type="InterPro" id="IPR036394">
    <property type="entry name" value="Ribosomal_uL22_sf"/>
</dbReference>
<dbReference type="PANTHER" id="PTHR13501">
    <property type="entry name" value="CHLOROPLAST 50S RIBOSOMAL PROTEIN L22-RELATED"/>
    <property type="match status" value="1"/>
</dbReference>
<dbReference type="PANTHER" id="PTHR13501:SF8">
    <property type="entry name" value="LARGE RIBOSOMAL SUBUNIT PROTEIN UL22M"/>
    <property type="match status" value="1"/>
</dbReference>
<dbReference type="Pfam" id="PF00237">
    <property type="entry name" value="Ribosomal_L22"/>
    <property type="match status" value="1"/>
</dbReference>
<dbReference type="SUPFAM" id="SSF54843">
    <property type="entry name" value="Ribosomal protein L22"/>
    <property type="match status" value="1"/>
</dbReference>
<accession>P53881</accession>
<accession>D6W108</accession>
<sequence>MNFHTARISQVGVISRALLSSVSRRWIHVTPISLNNSGGSLFGSITENKPKEGKNRGDEDAGSFSNRLAIASDSSGEAPEVNRDSITIENDKLLQQHIISLQQPEQLASQSLLSPLKREIYEANCKINGGFYKKDTIVKLPNSSERYKLKLTKREIEVLEPSVYAQSYRIKSSMKKATLLLRLLGGLDVMKAISQCHFSNKKIAREVAELLQKGVKDGQKLGLKPEDLYISQIWTGSDGFWRKRVEFKARTRIGIISHPYIHVRCILRTKSVTKRRLAYEAHLKEQKRAPWVQLGDKPIRGVTGGVYKW</sequence>
<name>RM22_YEAST</name>
<reference key="1">
    <citation type="journal article" date="1997" name="Nature">
        <title>The nucleotide sequence of Saccharomyces cerevisiae chromosome XIV and its evolutionary implications.</title>
        <authorList>
            <person name="Philippsen P."/>
            <person name="Kleine K."/>
            <person name="Poehlmann R."/>
            <person name="Duesterhoeft A."/>
            <person name="Hamberg K."/>
            <person name="Hegemann J.H."/>
            <person name="Obermaier B."/>
            <person name="Urrestarazu L.A."/>
            <person name="Aert R."/>
            <person name="Albermann K."/>
            <person name="Altmann R."/>
            <person name="Andre B."/>
            <person name="Baladron V."/>
            <person name="Ballesta J.P.G."/>
            <person name="Becam A.-M."/>
            <person name="Beinhauer J.D."/>
            <person name="Boskovic J."/>
            <person name="Buitrago M.J."/>
            <person name="Bussereau F."/>
            <person name="Coster F."/>
            <person name="Crouzet M."/>
            <person name="D'Angelo M."/>
            <person name="Dal Pero F."/>
            <person name="De Antoni A."/>
            <person name="del Rey F."/>
            <person name="Doignon F."/>
            <person name="Domdey H."/>
            <person name="Dubois E."/>
            <person name="Fiedler T.A."/>
            <person name="Fleig U."/>
            <person name="Floeth M."/>
            <person name="Fritz C."/>
            <person name="Gaillardin C."/>
            <person name="Garcia-Cantalejo J.M."/>
            <person name="Glansdorff N."/>
            <person name="Goffeau A."/>
            <person name="Gueldener U."/>
            <person name="Herbert C.J."/>
            <person name="Heumann K."/>
            <person name="Heuss-Neitzel D."/>
            <person name="Hilbert H."/>
            <person name="Hinni K."/>
            <person name="Iraqui Houssaini I."/>
            <person name="Jacquet M."/>
            <person name="Jimenez A."/>
            <person name="Jonniaux J.-L."/>
            <person name="Karpfinger-Hartl L."/>
            <person name="Lanfranchi G."/>
            <person name="Lepingle A."/>
            <person name="Levesque H."/>
            <person name="Lyck R."/>
            <person name="Maftahi M."/>
            <person name="Mallet L."/>
            <person name="Maurer C.T.C."/>
            <person name="Messenguy F."/>
            <person name="Mewes H.-W."/>
            <person name="Moestl D."/>
            <person name="Nasr F."/>
            <person name="Nicaud J.-M."/>
            <person name="Niedenthal R.K."/>
            <person name="Pandolfo D."/>
            <person name="Pierard A."/>
            <person name="Piravandi E."/>
            <person name="Planta R.J."/>
            <person name="Pohl T.M."/>
            <person name="Purnelle B."/>
            <person name="Rebischung C."/>
            <person name="Remacha M.A."/>
            <person name="Revuelta J.L."/>
            <person name="Rinke M."/>
            <person name="Saiz J.E."/>
            <person name="Sartorello F."/>
            <person name="Scherens B."/>
            <person name="Sen-Gupta M."/>
            <person name="Soler-Mira A."/>
            <person name="Urbanus J.H.M."/>
            <person name="Valle G."/>
            <person name="Van Dyck L."/>
            <person name="Verhasselt P."/>
            <person name="Vierendeels F."/>
            <person name="Vissers S."/>
            <person name="Voet M."/>
            <person name="Volckaert G."/>
            <person name="Wach A."/>
            <person name="Wambutt R."/>
            <person name="Wedler H."/>
            <person name="Zollner A."/>
            <person name="Hani J."/>
        </authorList>
    </citation>
    <scope>NUCLEOTIDE SEQUENCE [LARGE SCALE GENOMIC DNA]</scope>
    <source>
        <strain>ATCC 204508 / S288c</strain>
    </source>
</reference>
<reference key="2">
    <citation type="journal article" date="2014" name="G3 (Bethesda)">
        <title>The reference genome sequence of Saccharomyces cerevisiae: Then and now.</title>
        <authorList>
            <person name="Engel S.R."/>
            <person name="Dietrich F.S."/>
            <person name="Fisk D.G."/>
            <person name="Binkley G."/>
            <person name="Balakrishnan R."/>
            <person name="Costanzo M.C."/>
            <person name="Dwight S.S."/>
            <person name="Hitz B.C."/>
            <person name="Karra K."/>
            <person name="Nash R.S."/>
            <person name="Weng S."/>
            <person name="Wong E.D."/>
            <person name="Lloyd P."/>
            <person name="Skrzypek M.S."/>
            <person name="Miyasato S.R."/>
            <person name="Simison M."/>
            <person name="Cherry J.M."/>
        </authorList>
    </citation>
    <scope>GENOME REANNOTATION</scope>
    <scope>SEQUENCE REVISION TO 151</scope>
    <source>
        <strain>ATCC 204508 / S288c</strain>
    </source>
</reference>
<reference key="3">
    <citation type="journal article" date="2002" name="Eur. J. Biochem.">
        <title>Tag-mediated isolation of yeast mitochondrial ribosome and mass spectrometric identification of its new components.</title>
        <authorList>
            <person name="Gan X."/>
            <person name="Kitakawa M."/>
            <person name="Yoshino K."/>
            <person name="Oshiro N."/>
            <person name="Yonezawa K."/>
            <person name="Isono K."/>
        </authorList>
    </citation>
    <scope>IDENTIFICATION IN THE MITOCHONDRIAL RIBOSOMAL LARGE COMPLEX</scope>
    <scope>IDENTIFICATION BY MASS SPECTROMETRY</scope>
</reference>
<reference key="4">
    <citation type="journal article" date="2003" name="Nature">
        <title>Global analysis of protein localization in budding yeast.</title>
        <authorList>
            <person name="Huh W.-K."/>
            <person name="Falvo J.V."/>
            <person name="Gerke L.C."/>
            <person name="Carroll A.S."/>
            <person name="Howson R.W."/>
            <person name="Weissman J.S."/>
            <person name="O'Shea E.K."/>
        </authorList>
    </citation>
    <scope>SUBCELLULAR LOCATION [LARGE SCALE ANALYSIS]</scope>
</reference>
<reference key="5">
    <citation type="journal article" date="2003" name="Nature">
        <title>Global analysis of protein expression in yeast.</title>
        <authorList>
            <person name="Ghaemmaghami S."/>
            <person name="Huh W.-K."/>
            <person name="Bower K."/>
            <person name="Howson R.W."/>
            <person name="Belle A."/>
            <person name="Dephoure N."/>
            <person name="O'Shea E.K."/>
            <person name="Weissman J.S."/>
        </authorList>
    </citation>
    <scope>LEVEL OF PROTEIN EXPRESSION [LARGE SCALE ANALYSIS]</scope>
</reference>
<reference key="6">
    <citation type="journal article" date="2003" name="Proc. Natl. Acad. Sci. U.S.A.">
        <title>The proteome of Saccharomyces cerevisiae mitochondria.</title>
        <authorList>
            <person name="Sickmann A."/>
            <person name="Reinders J."/>
            <person name="Wagner Y."/>
            <person name="Joppich C."/>
            <person name="Zahedi R.P."/>
            <person name="Meyer H.E."/>
            <person name="Schoenfisch B."/>
            <person name="Perschil I."/>
            <person name="Chacinska A."/>
            <person name="Guiard B."/>
            <person name="Rehling P."/>
            <person name="Pfanner N."/>
            <person name="Meisinger C."/>
        </authorList>
    </citation>
    <scope>SUBCELLULAR LOCATION [LARGE SCALE ANALYSIS]</scope>
    <source>
        <strain>ATCC 76625 / YPH499</strain>
    </source>
</reference>
<reference key="7">
    <citation type="journal article" date="2015" name="Nat. Commun.">
        <title>Organization of the mitochondrial translation machinery studied in situ by cryoelectron tomography.</title>
        <authorList>
            <person name="Pfeffer S."/>
            <person name="Woellhaf M.W."/>
            <person name="Herrmann J.M."/>
            <person name="Forster F."/>
        </authorList>
    </citation>
    <scope>SUBCELLULAR LOCATION</scope>
</reference>
<reference key="8">
    <citation type="journal article" date="2014" name="Science">
        <title>Structure of the yeast mitochondrial large ribosomal subunit.</title>
        <authorList>
            <person name="Amunts A."/>
            <person name="Brown A."/>
            <person name="Bai X.C."/>
            <person name="Llacer J.L."/>
            <person name="Hussain T."/>
            <person name="Emsley P."/>
            <person name="Long F."/>
            <person name="Murshudov G."/>
            <person name="Scheres S.H."/>
            <person name="Ramakrishnan V."/>
        </authorList>
    </citation>
    <scope>STRUCTURE BY ELECTRON MICROSCOPY (3.20 ANGSTROMS)</scope>
    <scope>SUBUNIT</scope>
</reference>
<protein>
    <recommendedName>
        <fullName evidence="9">Large ribosomal subunit protein uL22m</fullName>
    </recommendedName>
    <alternativeName>
        <fullName>54S ribosomal protein L22, mitochondrial</fullName>
    </alternativeName>
</protein>